<accession>C3M8R6</accession>
<keyword id="KW-0963">Cytoplasm</keyword>
<keyword id="KW-1185">Reference proteome</keyword>
<keyword id="KW-0694">RNA-binding</keyword>
<evidence type="ECO:0000255" key="1">
    <source>
        <dbReference type="HAMAP-Rule" id="MF_00023"/>
    </source>
</evidence>
<evidence type="ECO:0000256" key="2">
    <source>
        <dbReference type="SAM" id="MobiDB-lite"/>
    </source>
</evidence>
<protein>
    <recommendedName>
        <fullName evidence="1">SsrA-binding protein</fullName>
    </recommendedName>
    <alternativeName>
        <fullName evidence="1">Small protein B</fullName>
    </alternativeName>
</protein>
<gene>
    <name evidence="1" type="primary">smpB</name>
    <name type="ordered locus">NGR_c08210</name>
</gene>
<dbReference type="EMBL" id="CP001389">
    <property type="protein sequence ID" value="ACP24612.1"/>
    <property type="molecule type" value="Genomic_DNA"/>
</dbReference>
<dbReference type="RefSeq" id="WP_012707397.1">
    <property type="nucleotide sequence ID" value="NC_012587.1"/>
</dbReference>
<dbReference type="RefSeq" id="YP_002825365.1">
    <property type="nucleotide sequence ID" value="NC_012587.1"/>
</dbReference>
<dbReference type="SMR" id="C3M8R6"/>
<dbReference type="STRING" id="394.NGR_c08210"/>
<dbReference type="KEGG" id="rhi:NGR_c08210"/>
<dbReference type="PATRIC" id="fig|394.7.peg.3633"/>
<dbReference type="eggNOG" id="COG0691">
    <property type="taxonomic scope" value="Bacteria"/>
</dbReference>
<dbReference type="HOGENOM" id="CLU_108953_0_1_5"/>
<dbReference type="OrthoDB" id="9805462at2"/>
<dbReference type="Proteomes" id="UP000001054">
    <property type="component" value="Chromosome"/>
</dbReference>
<dbReference type="GO" id="GO:0005829">
    <property type="term" value="C:cytosol"/>
    <property type="evidence" value="ECO:0007669"/>
    <property type="project" value="TreeGrafter"/>
</dbReference>
<dbReference type="GO" id="GO:0003723">
    <property type="term" value="F:RNA binding"/>
    <property type="evidence" value="ECO:0007669"/>
    <property type="project" value="UniProtKB-UniRule"/>
</dbReference>
<dbReference type="GO" id="GO:0070929">
    <property type="term" value="P:trans-translation"/>
    <property type="evidence" value="ECO:0007669"/>
    <property type="project" value="UniProtKB-UniRule"/>
</dbReference>
<dbReference type="CDD" id="cd09294">
    <property type="entry name" value="SmpB"/>
    <property type="match status" value="1"/>
</dbReference>
<dbReference type="Gene3D" id="2.40.280.10">
    <property type="match status" value="1"/>
</dbReference>
<dbReference type="HAMAP" id="MF_00023">
    <property type="entry name" value="SmpB"/>
    <property type="match status" value="1"/>
</dbReference>
<dbReference type="InterPro" id="IPR023620">
    <property type="entry name" value="SmpB"/>
</dbReference>
<dbReference type="InterPro" id="IPR000037">
    <property type="entry name" value="SsrA-bd_prot"/>
</dbReference>
<dbReference type="InterPro" id="IPR020081">
    <property type="entry name" value="SsrA-bd_prot_CS"/>
</dbReference>
<dbReference type="NCBIfam" id="NF003843">
    <property type="entry name" value="PRK05422.1"/>
    <property type="match status" value="1"/>
</dbReference>
<dbReference type="NCBIfam" id="TIGR00086">
    <property type="entry name" value="smpB"/>
    <property type="match status" value="1"/>
</dbReference>
<dbReference type="PANTHER" id="PTHR30308:SF2">
    <property type="entry name" value="SSRA-BINDING PROTEIN"/>
    <property type="match status" value="1"/>
</dbReference>
<dbReference type="PANTHER" id="PTHR30308">
    <property type="entry name" value="TMRNA-BINDING COMPONENT OF TRANS-TRANSLATION TAGGING COMPLEX"/>
    <property type="match status" value="1"/>
</dbReference>
<dbReference type="Pfam" id="PF01668">
    <property type="entry name" value="SmpB"/>
    <property type="match status" value="1"/>
</dbReference>
<dbReference type="SUPFAM" id="SSF74982">
    <property type="entry name" value="Small protein B (SmpB)"/>
    <property type="match status" value="1"/>
</dbReference>
<dbReference type="PROSITE" id="PS01317">
    <property type="entry name" value="SSRP"/>
    <property type="match status" value="1"/>
</dbReference>
<comment type="function">
    <text evidence="1">Required for rescue of stalled ribosomes mediated by trans-translation. Binds to transfer-messenger RNA (tmRNA), required for stable association of tmRNA with ribosomes. tmRNA and SmpB together mimic tRNA shape, replacing the anticodon stem-loop with SmpB. tmRNA is encoded by the ssrA gene; the 2 termini fold to resemble tRNA(Ala) and it encodes a 'tag peptide', a short internal open reading frame. During trans-translation Ala-aminoacylated tmRNA acts like a tRNA, entering the A-site of stalled ribosomes, displacing the stalled mRNA. The ribosome then switches to translate the ORF on the tmRNA; the nascent peptide is terminated with the 'tag peptide' encoded by the tmRNA and targeted for degradation. The ribosome is freed to recommence translation, which seems to be the essential function of trans-translation.</text>
</comment>
<comment type="subcellular location">
    <subcellularLocation>
        <location evidence="1">Cytoplasm</location>
    </subcellularLocation>
    <text evidence="1">The tmRNA-SmpB complex associates with stalled 70S ribosomes.</text>
</comment>
<comment type="similarity">
    <text evidence="1">Belongs to the SmpB family.</text>
</comment>
<feature type="chain" id="PRO_1000197620" description="SsrA-binding protein">
    <location>
        <begin position="1"/>
        <end position="159"/>
    </location>
</feature>
<feature type="region of interest" description="Disordered" evidence="2">
    <location>
        <begin position="134"/>
        <end position="159"/>
    </location>
</feature>
<feature type="compositionally biased region" description="Basic and acidic residues" evidence="2">
    <location>
        <begin position="137"/>
        <end position="159"/>
    </location>
</feature>
<organism>
    <name type="scientific">Sinorhizobium fredii (strain NBRC 101917 / NGR234)</name>
    <dbReference type="NCBI Taxonomy" id="394"/>
    <lineage>
        <taxon>Bacteria</taxon>
        <taxon>Pseudomonadati</taxon>
        <taxon>Pseudomonadota</taxon>
        <taxon>Alphaproteobacteria</taxon>
        <taxon>Hyphomicrobiales</taxon>
        <taxon>Rhizobiaceae</taxon>
        <taxon>Sinorhizobium/Ensifer group</taxon>
        <taxon>Sinorhizobium</taxon>
    </lineage>
</organism>
<proteinExistence type="inferred from homology"/>
<sequence>MAQKGSERTIRKVVAENRKARFNYEIVDTYEAGLVLTGTEVKSLREGKANISESYATDEGGEIWLINSYLPEYLQANRFNHETRRRRKLLLSKREVNRLQGAVNREGMSLIPLKIYFNDRGRAKLELALGKGKKLHDKRETSKERDWNRQKNRLLKERG</sequence>
<name>SSRP_SINFN</name>
<reference key="1">
    <citation type="journal article" date="2009" name="Appl. Environ. Microbiol.">
        <title>Rhizobium sp. strain NGR234 possesses a remarkable number of secretion systems.</title>
        <authorList>
            <person name="Schmeisser C."/>
            <person name="Liesegang H."/>
            <person name="Krysciak D."/>
            <person name="Bakkou N."/>
            <person name="Le Quere A."/>
            <person name="Wollherr A."/>
            <person name="Heinemeyer I."/>
            <person name="Morgenstern B."/>
            <person name="Pommerening-Roeser A."/>
            <person name="Flores M."/>
            <person name="Palacios R."/>
            <person name="Brenner S."/>
            <person name="Gottschalk G."/>
            <person name="Schmitz R.A."/>
            <person name="Broughton W.J."/>
            <person name="Perret X."/>
            <person name="Strittmatter A.W."/>
            <person name="Streit W.R."/>
        </authorList>
    </citation>
    <scope>NUCLEOTIDE SEQUENCE [LARGE SCALE GENOMIC DNA]</scope>
    <source>
        <strain>NBRC 101917 / NGR234</strain>
    </source>
</reference>